<feature type="chain" id="PRO_1000144668" description="Large ribosomal subunit protein uL30">
    <location>
        <begin position="1"/>
        <end position="61"/>
    </location>
</feature>
<accession>B1VEX3</accession>
<comment type="subunit">
    <text evidence="1">Part of the 50S ribosomal subunit.</text>
</comment>
<comment type="similarity">
    <text evidence="1">Belongs to the universal ribosomal protein uL30 family.</text>
</comment>
<sequence>MALKIRQIKGTVGRKQNQRDTLRSLGLKRIGQEVIREDNSVTRGMVHTVRHLVEVEEVAGE</sequence>
<proteinExistence type="inferred from homology"/>
<evidence type="ECO:0000255" key="1">
    <source>
        <dbReference type="HAMAP-Rule" id="MF_01371"/>
    </source>
</evidence>
<evidence type="ECO:0000305" key="2"/>
<gene>
    <name evidence="1" type="primary">rpmD</name>
    <name type="ordered locus">cu0352</name>
</gene>
<keyword id="KW-1185">Reference proteome</keyword>
<keyword id="KW-0687">Ribonucleoprotein</keyword>
<keyword id="KW-0689">Ribosomal protein</keyword>
<name>RL30_CORU7</name>
<protein>
    <recommendedName>
        <fullName evidence="1">Large ribosomal subunit protein uL30</fullName>
    </recommendedName>
    <alternativeName>
        <fullName evidence="2">50S ribosomal protein L30</fullName>
    </alternativeName>
</protein>
<organism>
    <name type="scientific">Corynebacterium urealyticum (strain ATCC 43042 / DSM 7109)</name>
    <dbReference type="NCBI Taxonomy" id="504474"/>
    <lineage>
        <taxon>Bacteria</taxon>
        <taxon>Bacillati</taxon>
        <taxon>Actinomycetota</taxon>
        <taxon>Actinomycetes</taxon>
        <taxon>Mycobacteriales</taxon>
        <taxon>Corynebacteriaceae</taxon>
        <taxon>Corynebacterium</taxon>
    </lineage>
</organism>
<reference key="1">
    <citation type="journal article" date="2008" name="J. Biotechnol.">
        <title>The lifestyle of Corynebacterium urealyticum derived from its complete genome sequence established by pyrosequencing.</title>
        <authorList>
            <person name="Tauch A."/>
            <person name="Trost E."/>
            <person name="Tilker A."/>
            <person name="Ludewig U."/>
            <person name="Schneiker S."/>
            <person name="Goesmann A."/>
            <person name="Arnold W."/>
            <person name="Bekel T."/>
            <person name="Brinkrolf K."/>
            <person name="Brune I."/>
            <person name="Goetker S."/>
            <person name="Kalinowski J."/>
            <person name="Kamp P.-B."/>
            <person name="Lobo F.P."/>
            <person name="Viehoever P."/>
            <person name="Weisshaar B."/>
            <person name="Soriano F."/>
            <person name="Droege M."/>
            <person name="Puehler A."/>
        </authorList>
    </citation>
    <scope>NUCLEOTIDE SEQUENCE [LARGE SCALE GENOMIC DNA]</scope>
    <source>
        <strain>ATCC 43042 / DSM 7109</strain>
    </source>
</reference>
<dbReference type="EMBL" id="AM942444">
    <property type="protein sequence ID" value="CAQ04312.1"/>
    <property type="molecule type" value="Genomic_DNA"/>
</dbReference>
<dbReference type="RefSeq" id="WP_012359605.1">
    <property type="nucleotide sequence ID" value="NC_010545.1"/>
</dbReference>
<dbReference type="SMR" id="B1VEX3"/>
<dbReference type="STRING" id="504474.cu0352"/>
<dbReference type="GeneID" id="60605155"/>
<dbReference type="KEGG" id="cur:cu0352"/>
<dbReference type="eggNOG" id="COG1841">
    <property type="taxonomic scope" value="Bacteria"/>
</dbReference>
<dbReference type="HOGENOM" id="CLU_131047_2_0_11"/>
<dbReference type="Proteomes" id="UP000001727">
    <property type="component" value="Chromosome"/>
</dbReference>
<dbReference type="GO" id="GO:0022625">
    <property type="term" value="C:cytosolic large ribosomal subunit"/>
    <property type="evidence" value="ECO:0007669"/>
    <property type="project" value="TreeGrafter"/>
</dbReference>
<dbReference type="GO" id="GO:0003735">
    <property type="term" value="F:structural constituent of ribosome"/>
    <property type="evidence" value="ECO:0007669"/>
    <property type="project" value="InterPro"/>
</dbReference>
<dbReference type="GO" id="GO:0006412">
    <property type="term" value="P:translation"/>
    <property type="evidence" value="ECO:0007669"/>
    <property type="project" value="UniProtKB-UniRule"/>
</dbReference>
<dbReference type="CDD" id="cd01658">
    <property type="entry name" value="Ribosomal_L30"/>
    <property type="match status" value="1"/>
</dbReference>
<dbReference type="Gene3D" id="3.30.1390.20">
    <property type="entry name" value="Ribosomal protein L30, ferredoxin-like fold domain"/>
    <property type="match status" value="1"/>
</dbReference>
<dbReference type="HAMAP" id="MF_01371_B">
    <property type="entry name" value="Ribosomal_uL30_B"/>
    <property type="match status" value="1"/>
</dbReference>
<dbReference type="InterPro" id="IPR036919">
    <property type="entry name" value="Ribo_uL30_ferredoxin-like_sf"/>
</dbReference>
<dbReference type="InterPro" id="IPR005996">
    <property type="entry name" value="Ribosomal_uL30_bac-type"/>
</dbReference>
<dbReference type="InterPro" id="IPR018038">
    <property type="entry name" value="Ribosomal_uL30_CS"/>
</dbReference>
<dbReference type="InterPro" id="IPR016082">
    <property type="entry name" value="Ribosomal_uL30_ferredoxin-like"/>
</dbReference>
<dbReference type="NCBIfam" id="TIGR01308">
    <property type="entry name" value="rpmD_bact"/>
    <property type="match status" value="1"/>
</dbReference>
<dbReference type="PANTHER" id="PTHR15892:SF2">
    <property type="entry name" value="LARGE RIBOSOMAL SUBUNIT PROTEIN UL30M"/>
    <property type="match status" value="1"/>
</dbReference>
<dbReference type="PANTHER" id="PTHR15892">
    <property type="entry name" value="MITOCHONDRIAL RIBOSOMAL PROTEIN L30"/>
    <property type="match status" value="1"/>
</dbReference>
<dbReference type="Pfam" id="PF00327">
    <property type="entry name" value="Ribosomal_L30"/>
    <property type="match status" value="1"/>
</dbReference>
<dbReference type="PIRSF" id="PIRSF002211">
    <property type="entry name" value="Ribosomal_L30_bac-type"/>
    <property type="match status" value="1"/>
</dbReference>
<dbReference type="SUPFAM" id="SSF55129">
    <property type="entry name" value="Ribosomal protein L30p/L7e"/>
    <property type="match status" value="1"/>
</dbReference>
<dbReference type="PROSITE" id="PS00634">
    <property type="entry name" value="RIBOSOMAL_L30"/>
    <property type="match status" value="1"/>
</dbReference>